<evidence type="ECO:0000255" key="1">
    <source>
        <dbReference type="HAMAP-Rule" id="MF_01320"/>
    </source>
</evidence>
<evidence type="ECO:0000256" key="2">
    <source>
        <dbReference type="SAM" id="MobiDB-lite"/>
    </source>
</evidence>
<evidence type="ECO:0000305" key="3"/>
<evidence type="ECO:0007829" key="4">
    <source>
        <dbReference type="PDB" id="5O60"/>
    </source>
</evidence>
<evidence type="ECO:0007829" key="5">
    <source>
        <dbReference type="PDB" id="5XYM"/>
    </source>
</evidence>
<evidence type="ECO:0007829" key="6">
    <source>
        <dbReference type="PDB" id="5ZET"/>
    </source>
</evidence>
<evidence type="ECO:0007829" key="7">
    <source>
        <dbReference type="PDB" id="6DZP"/>
    </source>
</evidence>
<evidence type="ECO:0007829" key="8">
    <source>
        <dbReference type="PDB" id="7XAM"/>
    </source>
</evidence>
<proteinExistence type="evidence at protein level"/>
<organism>
    <name type="scientific">Mycolicibacterium smegmatis (strain ATCC 700084 / mc(2)155)</name>
    <name type="common">Mycobacterium smegmatis</name>
    <dbReference type="NCBI Taxonomy" id="246196"/>
    <lineage>
        <taxon>Bacteria</taxon>
        <taxon>Bacillati</taxon>
        <taxon>Actinomycetota</taxon>
        <taxon>Actinomycetes</taxon>
        <taxon>Mycobacteriales</taxon>
        <taxon>Mycobacteriaceae</taxon>
        <taxon>Mycolicibacterium</taxon>
    </lineage>
</organism>
<gene>
    <name evidence="1" type="primary">rplB</name>
    <name type="ordered locus">MSMEG_1439</name>
    <name type="ordered locus">MSMEI_1403</name>
</gene>
<sequence length="278" mass="30358">MGIRKYKPTTPGRRGASVSDFAEITRSTPEKSLVRPLHGKGGRNAHGRITTRHKGGGHKRAYRVIDFRRHDKDGVNAKVAHIEYDPNRTANIALLHYLDGEKRYIIAPQGLKQGDVIESGANADIKPGNNLPLRNIPAGTVIHAVELRPGGGAKLARSAGVSIQLLGKEGTYAALRMPSGEIRRVDVRCRATVGEVGNAEQSNINWGKAGRMRWKGKRPTVRGVVMNPVDHPHGGGEGKTSGGRHPVSPWGKPEGRTRKPNKPSDKLIVRRRRTGKKR</sequence>
<keyword id="KW-0002">3D-structure</keyword>
<keyword id="KW-1185">Reference proteome</keyword>
<keyword id="KW-0687">Ribonucleoprotein</keyword>
<keyword id="KW-0689">Ribosomal protein</keyword>
<keyword id="KW-0694">RNA-binding</keyword>
<keyword id="KW-0699">rRNA-binding</keyword>
<dbReference type="EMBL" id="CP000480">
    <property type="protein sequence ID" value="ABK74446.1"/>
    <property type="molecule type" value="Genomic_DNA"/>
</dbReference>
<dbReference type="EMBL" id="CP001663">
    <property type="protein sequence ID" value="AFP37876.1"/>
    <property type="molecule type" value="Genomic_DNA"/>
</dbReference>
<dbReference type="RefSeq" id="WP_011727672.1">
    <property type="nucleotide sequence ID" value="NZ_SIJM01000016.1"/>
</dbReference>
<dbReference type="RefSeq" id="YP_885822.1">
    <property type="nucleotide sequence ID" value="NC_008596.1"/>
</dbReference>
<dbReference type="PDB" id="5O60">
    <property type="method" value="EM"/>
    <property type="resolution" value="3.20 A"/>
    <property type="chains" value="C=1-278"/>
</dbReference>
<dbReference type="PDB" id="5O61">
    <property type="method" value="EM"/>
    <property type="resolution" value="3.31 A"/>
    <property type="chains" value="C=1-278"/>
</dbReference>
<dbReference type="PDB" id="5XYM">
    <property type="method" value="EM"/>
    <property type="resolution" value="3.08 A"/>
    <property type="chains" value="C=1-278"/>
</dbReference>
<dbReference type="PDB" id="5ZEB">
    <property type="method" value="EM"/>
    <property type="resolution" value="3.40 A"/>
    <property type="chains" value="C=1-278"/>
</dbReference>
<dbReference type="PDB" id="5ZEP">
    <property type="method" value="EM"/>
    <property type="resolution" value="3.40 A"/>
    <property type="chains" value="C=1-278"/>
</dbReference>
<dbReference type="PDB" id="5ZET">
    <property type="method" value="EM"/>
    <property type="resolution" value="3.20 A"/>
    <property type="chains" value="C=1-278"/>
</dbReference>
<dbReference type="PDB" id="6DZI">
    <property type="method" value="EM"/>
    <property type="resolution" value="3.46 A"/>
    <property type="chains" value="C=2-276"/>
</dbReference>
<dbReference type="PDB" id="6DZP">
    <property type="method" value="EM"/>
    <property type="resolution" value="3.42 A"/>
    <property type="chains" value="C=1-278"/>
</dbReference>
<dbReference type="PDB" id="7S0S">
    <property type="method" value="EM"/>
    <property type="resolution" value="3.05 A"/>
    <property type="chains" value="D=2-276"/>
</dbReference>
<dbReference type="PDB" id="7XAM">
    <property type="method" value="EM"/>
    <property type="resolution" value="2.80 A"/>
    <property type="chains" value="C=1-278"/>
</dbReference>
<dbReference type="PDB" id="7Y41">
    <property type="method" value="EM"/>
    <property type="resolution" value="4.10 A"/>
    <property type="chains" value="C=1-278"/>
</dbReference>
<dbReference type="PDB" id="8FR8">
    <property type="method" value="EM"/>
    <property type="resolution" value="2.76 A"/>
    <property type="chains" value="K=2-276"/>
</dbReference>
<dbReference type="PDB" id="8KAB">
    <property type="method" value="EM"/>
    <property type="resolution" value="3.30 A"/>
    <property type="chains" value="C=1-278"/>
</dbReference>
<dbReference type="PDB" id="8V9J">
    <property type="method" value="EM"/>
    <property type="resolution" value="3.10 A"/>
    <property type="chains" value="C=1-278"/>
</dbReference>
<dbReference type="PDB" id="8V9K">
    <property type="method" value="EM"/>
    <property type="resolution" value="3.10 A"/>
    <property type="chains" value="C=1-278"/>
</dbReference>
<dbReference type="PDB" id="8V9L">
    <property type="method" value="EM"/>
    <property type="resolution" value="3.00 A"/>
    <property type="chains" value="C=1-278"/>
</dbReference>
<dbReference type="PDB" id="8VIO">
    <property type="method" value="EM"/>
    <property type="resolution" value="3.26 A"/>
    <property type="chains" value="C=1-278"/>
</dbReference>
<dbReference type="PDB" id="8VK0">
    <property type="method" value="EM"/>
    <property type="resolution" value="3.14 A"/>
    <property type="chains" value="C=1-278"/>
</dbReference>
<dbReference type="PDB" id="8VK7">
    <property type="method" value="EM"/>
    <property type="resolution" value="3.09 A"/>
    <property type="chains" value="C=1-278"/>
</dbReference>
<dbReference type="PDB" id="8VKI">
    <property type="method" value="EM"/>
    <property type="resolution" value="2.96 A"/>
    <property type="chains" value="C=1-278"/>
</dbReference>
<dbReference type="PDB" id="8VKW">
    <property type="method" value="EM"/>
    <property type="resolution" value="3.44 A"/>
    <property type="chains" value="C=1-278"/>
</dbReference>
<dbReference type="PDB" id="8VR4">
    <property type="method" value="EM"/>
    <property type="resolution" value="2.80 A"/>
    <property type="chains" value="C=1-278"/>
</dbReference>
<dbReference type="PDB" id="8VR8">
    <property type="method" value="EM"/>
    <property type="resolution" value="3.25 A"/>
    <property type="chains" value="C=1-278"/>
</dbReference>
<dbReference type="PDB" id="8VRL">
    <property type="method" value="EM"/>
    <property type="resolution" value="3.33 A"/>
    <property type="chains" value="C=1-278"/>
</dbReference>
<dbReference type="PDB" id="8WHX">
    <property type="method" value="EM"/>
    <property type="resolution" value="2.80 A"/>
    <property type="chains" value="E=1-278"/>
</dbReference>
<dbReference type="PDB" id="8WHY">
    <property type="method" value="EM"/>
    <property type="resolution" value="2.70 A"/>
    <property type="chains" value="E=1-278"/>
</dbReference>
<dbReference type="PDB" id="8WI7">
    <property type="method" value="EM"/>
    <property type="resolution" value="3.50 A"/>
    <property type="chains" value="E=1-278"/>
</dbReference>
<dbReference type="PDB" id="8WI8">
    <property type="method" value="EM"/>
    <property type="resolution" value="2.70 A"/>
    <property type="chains" value="E=1-278"/>
</dbReference>
<dbReference type="PDB" id="8WIB">
    <property type="method" value="EM"/>
    <property type="resolution" value="3.50 A"/>
    <property type="chains" value="E=1-278"/>
</dbReference>
<dbReference type="PDB" id="8WIC">
    <property type="method" value="EM"/>
    <property type="resolution" value="3.50 A"/>
    <property type="chains" value="E=1-278"/>
</dbReference>
<dbReference type="PDB" id="8XZ3">
    <property type="method" value="EM"/>
    <property type="resolution" value="3.60 A"/>
    <property type="chains" value="C=2-276"/>
</dbReference>
<dbReference type="PDBsum" id="5O60"/>
<dbReference type="PDBsum" id="5O61"/>
<dbReference type="PDBsum" id="5XYM"/>
<dbReference type="PDBsum" id="5ZEB"/>
<dbReference type="PDBsum" id="5ZEP"/>
<dbReference type="PDBsum" id="5ZET"/>
<dbReference type="PDBsum" id="6DZI"/>
<dbReference type="PDBsum" id="6DZP"/>
<dbReference type="PDBsum" id="7S0S"/>
<dbReference type="PDBsum" id="7XAM"/>
<dbReference type="PDBsum" id="7Y41"/>
<dbReference type="PDBsum" id="8FR8"/>
<dbReference type="PDBsum" id="8KAB"/>
<dbReference type="PDBsum" id="8V9J"/>
<dbReference type="PDBsum" id="8V9K"/>
<dbReference type="PDBsum" id="8V9L"/>
<dbReference type="PDBsum" id="8VIO"/>
<dbReference type="PDBsum" id="8VK0"/>
<dbReference type="PDBsum" id="8VK7"/>
<dbReference type="PDBsum" id="8VKI"/>
<dbReference type="PDBsum" id="8VKW"/>
<dbReference type="PDBsum" id="8VR4"/>
<dbReference type="PDBsum" id="8VR8"/>
<dbReference type="PDBsum" id="8VRL"/>
<dbReference type="PDBsum" id="8WHX"/>
<dbReference type="PDBsum" id="8WHY"/>
<dbReference type="PDBsum" id="8WI7"/>
<dbReference type="PDBsum" id="8WI8"/>
<dbReference type="PDBsum" id="8WIB"/>
<dbReference type="PDBsum" id="8WIC"/>
<dbReference type="PDBsum" id="8XZ3"/>
<dbReference type="EMDB" id="EMD-29397"/>
<dbReference type="EMDB" id="EMD-33096"/>
<dbReference type="EMDB" id="EMD-33599"/>
<dbReference type="EMDB" id="EMD-37007"/>
<dbReference type="EMDB" id="EMD-3750"/>
<dbReference type="EMDB" id="EMD-3751"/>
<dbReference type="EMDB" id="EMD-37551"/>
<dbReference type="EMDB" id="EMD-37552"/>
<dbReference type="EMDB" id="EMD-37559"/>
<dbReference type="EMDB" id="EMD-37560"/>
<dbReference type="EMDB" id="EMD-37562"/>
<dbReference type="EMDB" id="EMD-37563"/>
<dbReference type="EMDB" id="EMD-38788"/>
<dbReference type="EMDB" id="EMD-43074"/>
<dbReference type="EMDB" id="EMD-43075"/>
<dbReference type="EMDB" id="EMD-43076"/>
<dbReference type="EMDB" id="EMD-43267"/>
<dbReference type="EMDB" id="EMD-43294"/>
<dbReference type="EMDB" id="EMD-43305"/>
<dbReference type="EMDB" id="EMD-43317"/>
<dbReference type="EMDB" id="EMD-43333"/>
<dbReference type="EMDB" id="EMD-43476"/>
<dbReference type="EMDB" id="EMD-43477"/>
<dbReference type="EMDB" id="EMD-43484"/>
<dbReference type="EMDB" id="EMD-6789"/>
<dbReference type="EMDB" id="EMD-6920"/>
<dbReference type="EMDB" id="EMD-6921"/>
<dbReference type="EMDB" id="EMD-6922"/>
<dbReference type="EMDB" id="EMD-8932"/>
<dbReference type="EMDB" id="EMD-8937"/>
<dbReference type="SMR" id="A0QSD4"/>
<dbReference type="IntAct" id="A0QSD4">
    <property type="interactions" value="2"/>
</dbReference>
<dbReference type="STRING" id="246196.MSMEG_1439"/>
<dbReference type="PaxDb" id="246196-MSMEI_1403"/>
<dbReference type="GeneID" id="93456283"/>
<dbReference type="KEGG" id="msb:LJ00_07180"/>
<dbReference type="KEGG" id="msg:MSMEI_1403"/>
<dbReference type="KEGG" id="msm:MSMEG_1439"/>
<dbReference type="PATRIC" id="fig|246196.19.peg.1425"/>
<dbReference type="eggNOG" id="COG0090">
    <property type="taxonomic scope" value="Bacteria"/>
</dbReference>
<dbReference type="OrthoDB" id="9778722at2"/>
<dbReference type="Proteomes" id="UP000000757">
    <property type="component" value="Chromosome"/>
</dbReference>
<dbReference type="Proteomes" id="UP000006158">
    <property type="component" value="Chromosome"/>
</dbReference>
<dbReference type="GO" id="GO:0015934">
    <property type="term" value="C:large ribosomal subunit"/>
    <property type="evidence" value="ECO:0007669"/>
    <property type="project" value="InterPro"/>
</dbReference>
<dbReference type="GO" id="GO:0019843">
    <property type="term" value="F:rRNA binding"/>
    <property type="evidence" value="ECO:0007669"/>
    <property type="project" value="UniProtKB-UniRule"/>
</dbReference>
<dbReference type="GO" id="GO:0003735">
    <property type="term" value="F:structural constituent of ribosome"/>
    <property type="evidence" value="ECO:0007669"/>
    <property type="project" value="InterPro"/>
</dbReference>
<dbReference type="GO" id="GO:0016740">
    <property type="term" value="F:transferase activity"/>
    <property type="evidence" value="ECO:0007669"/>
    <property type="project" value="InterPro"/>
</dbReference>
<dbReference type="GO" id="GO:0002181">
    <property type="term" value="P:cytoplasmic translation"/>
    <property type="evidence" value="ECO:0007669"/>
    <property type="project" value="TreeGrafter"/>
</dbReference>
<dbReference type="FunFam" id="2.30.30.30:FF:000001">
    <property type="entry name" value="50S ribosomal protein L2"/>
    <property type="match status" value="1"/>
</dbReference>
<dbReference type="FunFam" id="2.40.50.140:FF:000003">
    <property type="entry name" value="50S ribosomal protein L2"/>
    <property type="match status" value="1"/>
</dbReference>
<dbReference type="FunFam" id="4.10.950.10:FF:000001">
    <property type="entry name" value="50S ribosomal protein L2"/>
    <property type="match status" value="1"/>
</dbReference>
<dbReference type="Gene3D" id="2.30.30.30">
    <property type="match status" value="1"/>
</dbReference>
<dbReference type="Gene3D" id="2.40.50.140">
    <property type="entry name" value="Nucleic acid-binding proteins"/>
    <property type="match status" value="1"/>
</dbReference>
<dbReference type="Gene3D" id="4.10.950.10">
    <property type="entry name" value="Ribosomal protein L2, domain 3"/>
    <property type="match status" value="1"/>
</dbReference>
<dbReference type="HAMAP" id="MF_01320_B">
    <property type="entry name" value="Ribosomal_uL2_B"/>
    <property type="match status" value="1"/>
</dbReference>
<dbReference type="InterPro" id="IPR012340">
    <property type="entry name" value="NA-bd_OB-fold"/>
</dbReference>
<dbReference type="InterPro" id="IPR014722">
    <property type="entry name" value="Rib_uL2_dom2"/>
</dbReference>
<dbReference type="InterPro" id="IPR002171">
    <property type="entry name" value="Ribosomal_uL2"/>
</dbReference>
<dbReference type="InterPro" id="IPR005880">
    <property type="entry name" value="Ribosomal_uL2_bac/org-type"/>
</dbReference>
<dbReference type="InterPro" id="IPR022669">
    <property type="entry name" value="Ribosomal_uL2_C"/>
</dbReference>
<dbReference type="InterPro" id="IPR022671">
    <property type="entry name" value="Ribosomal_uL2_CS"/>
</dbReference>
<dbReference type="InterPro" id="IPR014726">
    <property type="entry name" value="Ribosomal_uL2_dom3"/>
</dbReference>
<dbReference type="InterPro" id="IPR022666">
    <property type="entry name" value="Ribosomal_uL2_RNA-bd_dom"/>
</dbReference>
<dbReference type="InterPro" id="IPR008991">
    <property type="entry name" value="Translation_prot_SH3-like_sf"/>
</dbReference>
<dbReference type="NCBIfam" id="TIGR01171">
    <property type="entry name" value="rplB_bact"/>
    <property type="match status" value="1"/>
</dbReference>
<dbReference type="PANTHER" id="PTHR13691:SF5">
    <property type="entry name" value="LARGE RIBOSOMAL SUBUNIT PROTEIN UL2M"/>
    <property type="match status" value="1"/>
</dbReference>
<dbReference type="PANTHER" id="PTHR13691">
    <property type="entry name" value="RIBOSOMAL PROTEIN L2"/>
    <property type="match status" value="1"/>
</dbReference>
<dbReference type="Pfam" id="PF00181">
    <property type="entry name" value="Ribosomal_L2"/>
    <property type="match status" value="1"/>
</dbReference>
<dbReference type="Pfam" id="PF03947">
    <property type="entry name" value="Ribosomal_L2_C"/>
    <property type="match status" value="1"/>
</dbReference>
<dbReference type="PIRSF" id="PIRSF002158">
    <property type="entry name" value="Ribosomal_L2"/>
    <property type="match status" value="1"/>
</dbReference>
<dbReference type="SMART" id="SM01383">
    <property type="entry name" value="Ribosomal_L2"/>
    <property type="match status" value="1"/>
</dbReference>
<dbReference type="SMART" id="SM01382">
    <property type="entry name" value="Ribosomal_L2_C"/>
    <property type="match status" value="1"/>
</dbReference>
<dbReference type="SUPFAM" id="SSF50249">
    <property type="entry name" value="Nucleic acid-binding proteins"/>
    <property type="match status" value="1"/>
</dbReference>
<dbReference type="SUPFAM" id="SSF50104">
    <property type="entry name" value="Translation proteins SH3-like domain"/>
    <property type="match status" value="1"/>
</dbReference>
<dbReference type="PROSITE" id="PS00467">
    <property type="entry name" value="RIBOSOMAL_L2"/>
    <property type="match status" value="1"/>
</dbReference>
<accession>A0QSD4</accession>
<accession>I7G409</accession>
<comment type="function">
    <text evidence="1">One of the primary rRNA binding proteins. Required for association of the 30S and 50S subunits to form the 70S ribosome, for tRNA binding and peptide bond formation. It has been suggested to have peptidyltransferase activity; this is somewhat controversial. Makes several contacts with the 16S rRNA in the 70S ribosome.</text>
</comment>
<comment type="subunit">
    <text evidence="1">Part of the 50S ribosomal subunit. Forms a bridge to the 30S subunit in the 70S ribosome.</text>
</comment>
<comment type="similarity">
    <text evidence="1">Belongs to the universal ribosomal protein uL2 family.</text>
</comment>
<protein>
    <recommendedName>
        <fullName evidence="1">Large ribosomal subunit protein uL2</fullName>
    </recommendedName>
    <alternativeName>
        <fullName evidence="3">50S ribosomal protein L2</fullName>
    </alternativeName>
</protein>
<reference key="1">
    <citation type="submission" date="2006-10" db="EMBL/GenBank/DDBJ databases">
        <authorList>
            <person name="Fleischmann R.D."/>
            <person name="Dodson R.J."/>
            <person name="Haft D.H."/>
            <person name="Merkel J.S."/>
            <person name="Nelson W.C."/>
            <person name="Fraser C.M."/>
        </authorList>
    </citation>
    <scope>NUCLEOTIDE SEQUENCE [LARGE SCALE GENOMIC DNA]</scope>
    <source>
        <strain>ATCC 700084 / mc(2)155</strain>
    </source>
</reference>
<reference key="2">
    <citation type="journal article" date="2007" name="Genome Biol.">
        <title>Interrupted coding sequences in Mycobacterium smegmatis: authentic mutations or sequencing errors?</title>
        <authorList>
            <person name="Deshayes C."/>
            <person name="Perrodou E."/>
            <person name="Gallien S."/>
            <person name="Euphrasie D."/>
            <person name="Schaeffer C."/>
            <person name="Van-Dorsselaer A."/>
            <person name="Poch O."/>
            <person name="Lecompte O."/>
            <person name="Reyrat J.-M."/>
        </authorList>
    </citation>
    <scope>NUCLEOTIDE SEQUENCE [LARGE SCALE GENOMIC DNA]</scope>
    <source>
        <strain>ATCC 700084 / mc(2)155</strain>
    </source>
</reference>
<reference key="3">
    <citation type="journal article" date="2009" name="Genome Res.">
        <title>Ortho-proteogenomics: multiple proteomes investigation through orthology and a new MS-based protocol.</title>
        <authorList>
            <person name="Gallien S."/>
            <person name="Perrodou E."/>
            <person name="Carapito C."/>
            <person name="Deshayes C."/>
            <person name="Reyrat J.-M."/>
            <person name="Van Dorsselaer A."/>
            <person name="Poch O."/>
            <person name="Schaeffer C."/>
            <person name="Lecompte O."/>
        </authorList>
    </citation>
    <scope>NUCLEOTIDE SEQUENCE [LARGE SCALE GENOMIC DNA]</scope>
    <scope>IDENTIFICATION BY MASS SPECTROMETRY [LARGE SCALE ANALYSIS]</scope>
    <source>
        <strain>ATCC 700084 / mc(2)155</strain>
    </source>
</reference>
<feature type="chain" id="PRO_0000309958" description="Large ribosomal subunit protein uL2">
    <location>
        <begin position="1"/>
        <end position="278"/>
    </location>
</feature>
<feature type="region of interest" description="Disordered" evidence="2">
    <location>
        <begin position="1"/>
        <end position="20"/>
    </location>
</feature>
<feature type="region of interest" description="Disordered" evidence="2">
    <location>
        <begin position="25"/>
        <end position="58"/>
    </location>
</feature>
<feature type="region of interest" description="Disordered" evidence="2">
    <location>
        <begin position="223"/>
        <end position="278"/>
    </location>
</feature>
<feature type="compositionally biased region" description="Basic residues" evidence="2">
    <location>
        <begin position="37"/>
        <end position="58"/>
    </location>
</feature>
<feature type="compositionally biased region" description="Basic and acidic residues" evidence="2">
    <location>
        <begin position="253"/>
        <end position="268"/>
    </location>
</feature>
<feature type="compositionally biased region" description="Basic residues" evidence="2">
    <location>
        <begin position="269"/>
        <end position="278"/>
    </location>
</feature>
<feature type="strand" evidence="4">
    <location>
        <begin position="3"/>
        <end position="5"/>
    </location>
</feature>
<feature type="strand" evidence="4">
    <location>
        <begin position="9"/>
        <end position="11"/>
    </location>
</feature>
<feature type="strand" evidence="6">
    <location>
        <begin position="13"/>
        <end position="15"/>
    </location>
</feature>
<feature type="strand" evidence="4">
    <location>
        <begin position="17"/>
        <end position="19"/>
    </location>
</feature>
<feature type="turn" evidence="6">
    <location>
        <begin position="31"/>
        <end position="33"/>
    </location>
</feature>
<feature type="strand" evidence="5">
    <location>
        <begin position="34"/>
        <end position="37"/>
    </location>
</feature>
<feature type="strand" evidence="5">
    <location>
        <begin position="45"/>
        <end position="47"/>
    </location>
</feature>
<feature type="strand" evidence="4">
    <location>
        <begin position="48"/>
        <end position="51"/>
    </location>
</feature>
<feature type="strand" evidence="5">
    <location>
        <begin position="60"/>
        <end position="63"/>
    </location>
</feature>
<feature type="strand" evidence="5">
    <location>
        <begin position="81"/>
        <end position="83"/>
    </location>
</feature>
<feature type="strand" evidence="5">
    <location>
        <begin position="86"/>
        <end position="90"/>
    </location>
</feature>
<feature type="strand" evidence="5">
    <location>
        <begin position="92"/>
        <end position="97"/>
    </location>
</feature>
<feature type="strand" evidence="5">
    <location>
        <begin position="102"/>
        <end position="106"/>
    </location>
</feature>
<feature type="strand" evidence="5">
    <location>
        <begin position="108"/>
        <end position="110"/>
    </location>
</feature>
<feature type="strand" evidence="5">
    <location>
        <begin position="117"/>
        <end position="120"/>
    </location>
</feature>
<feature type="strand" evidence="5">
    <location>
        <begin position="130"/>
        <end position="132"/>
    </location>
</feature>
<feature type="turn" evidence="5">
    <location>
        <begin position="133"/>
        <end position="135"/>
    </location>
</feature>
<feature type="strand" evidence="4">
    <location>
        <begin position="141"/>
        <end position="145"/>
    </location>
</feature>
<feature type="strand" evidence="8">
    <location>
        <begin position="153"/>
        <end position="156"/>
    </location>
</feature>
<feature type="strand" evidence="7">
    <location>
        <begin position="158"/>
        <end position="160"/>
    </location>
</feature>
<feature type="strand" evidence="5">
    <location>
        <begin position="164"/>
        <end position="167"/>
    </location>
</feature>
<feature type="strand" evidence="5">
    <location>
        <begin position="172"/>
        <end position="176"/>
    </location>
</feature>
<feature type="strand" evidence="5">
    <location>
        <begin position="182"/>
        <end position="185"/>
    </location>
</feature>
<feature type="strand" evidence="5">
    <location>
        <begin position="187"/>
        <end position="194"/>
    </location>
</feature>
<feature type="helix" evidence="5">
    <location>
        <begin position="201"/>
        <end position="203"/>
    </location>
</feature>
<feature type="helix" evidence="5">
    <location>
        <begin position="209"/>
        <end position="214"/>
    </location>
</feature>
<feature type="turn" evidence="5">
    <location>
        <begin position="223"/>
        <end position="225"/>
    </location>
</feature>
<feature type="turn" evidence="5">
    <location>
        <begin position="228"/>
        <end position="230"/>
    </location>
</feature>
<feature type="strand" evidence="6">
    <location>
        <begin position="231"/>
        <end position="233"/>
    </location>
</feature>
<feature type="strand" evidence="5">
    <location>
        <begin position="236"/>
        <end position="238"/>
    </location>
</feature>
<feature type="turn" evidence="8">
    <location>
        <begin position="239"/>
        <end position="241"/>
    </location>
</feature>
<feature type="strand" evidence="6">
    <location>
        <begin position="243"/>
        <end position="245"/>
    </location>
</feature>
<feature type="strand" evidence="4">
    <location>
        <begin position="253"/>
        <end position="255"/>
    </location>
</feature>
<feature type="turn" evidence="5">
    <location>
        <begin position="263"/>
        <end position="267"/>
    </location>
</feature>
<feature type="strand" evidence="4">
    <location>
        <begin position="268"/>
        <end position="270"/>
    </location>
</feature>
<name>RL2_MYCS2</name>